<protein>
    <recommendedName>
        <fullName evidence="1">Protein GrpE</fullName>
    </recommendedName>
    <alternativeName>
        <fullName evidence="1">HSP-70 cofactor</fullName>
    </alternativeName>
</protein>
<sequence length="188" mass="20770">MQFRGNVMQENQNQAAEAVENEMTETASAAHTELEQTPEQRIAGLEAEIAELNDTLLRARAELENQRRRAQDEVAAAHKYAIGKFAAELVTVKDYLEMALLDQSGQIDALKMGVDMTLKQLVSAFDKAQIKDIAPKLGDKLDPHQHQAMSAEESDAEPNTVVRVMQKGYLLADRVLRPAMVVVAKAKA</sequence>
<feature type="chain" id="PRO_0000113772" description="Protein GrpE">
    <location>
        <begin position="1"/>
        <end position="188"/>
    </location>
</feature>
<dbReference type="EMBL" id="AE016825">
    <property type="protein sequence ID" value="AAQ59318.1"/>
    <property type="molecule type" value="Genomic_DNA"/>
</dbReference>
<dbReference type="SMR" id="Q7NXI4"/>
<dbReference type="STRING" id="243365.CV_1642"/>
<dbReference type="KEGG" id="cvi:CV_1642"/>
<dbReference type="eggNOG" id="COG0576">
    <property type="taxonomic scope" value="Bacteria"/>
</dbReference>
<dbReference type="HOGENOM" id="CLU_057217_6_1_4"/>
<dbReference type="Proteomes" id="UP000001424">
    <property type="component" value="Chromosome"/>
</dbReference>
<dbReference type="GO" id="GO:0005829">
    <property type="term" value="C:cytosol"/>
    <property type="evidence" value="ECO:0007669"/>
    <property type="project" value="TreeGrafter"/>
</dbReference>
<dbReference type="GO" id="GO:0000774">
    <property type="term" value="F:adenyl-nucleotide exchange factor activity"/>
    <property type="evidence" value="ECO:0007669"/>
    <property type="project" value="InterPro"/>
</dbReference>
<dbReference type="GO" id="GO:0042803">
    <property type="term" value="F:protein homodimerization activity"/>
    <property type="evidence" value="ECO:0007669"/>
    <property type="project" value="InterPro"/>
</dbReference>
<dbReference type="GO" id="GO:0051087">
    <property type="term" value="F:protein-folding chaperone binding"/>
    <property type="evidence" value="ECO:0007669"/>
    <property type="project" value="InterPro"/>
</dbReference>
<dbReference type="GO" id="GO:0051082">
    <property type="term" value="F:unfolded protein binding"/>
    <property type="evidence" value="ECO:0007669"/>
    <property type="project" value="TreeGrafter"/>
</dbReference>
<dbReference type="GO" id="GO:0006457">
    <property type="term" value="P:protein folding"/>
    <property type="evidence" value="ECO:0007669"/>
    <property type="project" value="InterPro"/>
</dbReference>
<dbReference type="CDD" id="cd00446">
    <property type="entry name" value="GrpE"/>
    <property type="match status" value="1"/>
</dbReference>
<dbReference type="FunFam" id="2.30.22.10:FF:000001">
    <property type="entry name" value="Protein GrpE"/>
    <property type="match status" value="1"/>
</dbReference>
<dbReference type="Gene3D" id="3.90.20.20">
    <property type="match status" value="1"/>
</dbReference>
<dbReference type="Gene3D" id="2.30.22.10">
    <property type="entry name" value="Head domain of nucleotide exchange factor GrpE"/>
    <property type="match status" value="1"/>
</dbReference>
<dbReference type="HAMAP" id="MF_01151">
    <property type="entry name" value="GrpE"/>
    <property type="match status" value="1"/>
</dbReference>
<dbReference type="InterPro" id="IPR000740">
    <property type="entry name" value="GrpE"/>
</dbReference>
<dbReference type="InterPro" id="IPR013805">
    <property type="entry name" value="GrpE_coiled_coil"/>
</dbReference>
<dbReference type="InterPro" id="IPR009012">
    <property type="entry name" value="GrpE_head"/>
</dbReference>
<dbReference type="NCBIfam" id="NF010737">
    <property type="entry name" value="PRK14139.1"/>
    <property type="match status" value="1"/>
</dbReference>
<dbReference type="NCBIfam" id="NF010738">
    <property type="entry name" value="PRK14140.1"/>
    <property type="match status" value="1"/>
</dbReference>
<dbReference type="NCBIfam" id="NF010748">
    <property type="entry name" value="PRK14150.1"/>
    <property type="match status" value="1"/>
</dbReference>
<dbReference type="PANTHER" id="PTHR21237">
    <property type="entry name" value="GRPE PROTEIN"/>
    <property type="match status" value="1"/>
</dbReference>
<dbReference type="PANTHER" id="PTHR21237:SF23">
    <property type="entry name" value="GRPE PROTEIN HOMOLOG, MITOCHONDRIAL"/>
    <property type="match status" value="1"/>
</dbReference>
<dbReference type="Pfam" id="PF01025">
    <property type="entry name" value="GrpE"/>
    <property type="match status" value="1"/>
</dbReference>
<dbReference type="PRINTS" id="PR00773">
    <property type="entry name" value="GRPEPROTEIN"/>
</dbReference>
<dbReference type="SUPFAM" id="SSF58014">
    <property type="entry name" value="Coiled-coil domain of nucleotide exchange factor GrpE"/>
    <property type="match status" value="1"/>
</dbReference>
<dbReference type="SUPFAM" id="SSF51064">
    <property type="entry name" value="Head domain of nucleotide exchange factor GrpE"/>
    <property type="match status" value="1"/>
</dbReference>
<dbReference type="PROSITE" id="PS01071">
    <property type="entry name" value="GRPE"/>
    <property type="match status" value="1"/>
</dbReference>
<comment type="function">
    <text evidence="1">Participates actively in the response to hyperosmotic and heat shock by preventing the aggregation of stress-denatured proteins, in association with DnaK and GrpE. It is the nucleotide exchange factor for DnaK and may function as a thermosensor. Unfolded proteins bind initially to DnaJ; upon interaction with the DnaJ-bound protein, DnaK hydrolyzes its bound ATP, resulting in the formation of a stable complex. GrpE releases ADP from DnaK; ATP binding to DnaK triggers the release of the substrate protein, thus completing the reaction cycle. Several rounds of ATP-dependent interactions between DnaJ, DnaK and GrpE are required for fully efficient folding.</text>
</comment>
<comment type="subunit">
    <text evidence="1">Homodimer.</text>
</comment>
<comment type="subcellular location">
    <subcellularLocation>
        <location evidence="1">Cytoplasm</location>
    </subcellularLocation>
</comment>
<comment type="similarity">
    <text evidence="1">Belongs to the GrpE family.</text>
</comment>
<proteinExistence type="inferred from homology"/>
<organism>
    <name type="scientific">Chromobacterium violaceum (strain ATCC 12472 / DSM 30191 / JCM 1249 / CCUG 213 / NBRC 12614 / NCIMB 9131 / NCTC 9757 / MK)</name>
    <dbReference type="NCBI Taxonomy" id="243365"/>
    <lineage>
        <taxon>Bacteria</taxon>
        <taxon>Pseudomonadati</taxon>
        <taxon>Pseudomonadota</taxon>
        <taxon>Betaproteobacteria</taxon>
        <taxon>Neisseriales</taxon>
        <taxon>Chromobacteriaceae</taxon>
        <taxon>Chromobacterium</taxon>
    </lineage>
</organism>
<reference key="1">
    <citation type="journal article" date="2003" name="Proc. Natl. Acad. Sci. U.S.A.">
        <title>The complete genome sequence of Chromobacterium violaceum reveals remarkable and exploitable bacterial adaptability.</title>
        <authorList>
            <person name="Vasconcelos A.T.R."/>
            <person name="de Almeida D.F."/>
            <person name="Hungria M."/>
            <person name="Guimaraes C.T."/>
            <person name="Antonio R.V."/>
            <person name="Almeida F.C."/>
            <person name="de Almeida L.G.P."/>
            <person name="de Almeida R."/>
            <person name="Alves-Gomes J.A."/>
            <person name="Andrade E.M."/>
            <person name="Araripe J."/>
            <person name="de Araujo M.F.F."/>
            <person name="Astolfi-Filho S."/>
            <person name="Azevedo V."/>
            <person name="Baptista A.J."/>
            <person name="Bataus L.A.M."/>
            <person name="Batista J.S."/>
            <person name="Belo A."/>
            <person name="van den Berg C."/>
            <person name="Bogo M."/>
            <person name="Bonatto S."/>
            <person name="Bordignon J."/>
            <person name="Brigido M.M."/>
            <person name="Brito C.A."/>
            <person name="Brocchi M."/>
            <person name="Burity H.A."/>
            <person name="Camargo A.A."/>
            <person name="Cardoso D.D.P."/>
            <person name="Carneiro N.P."/>
            <person name="Carraro D.M."/>
            <person name="Carvalho C.M.B."/>
            <person name="Cascardo J.C.M."/>
            <person name="Cavada B.S."/>
            <person name="Chueire L.M.O."/>
            <person name="Creczynski-Pasa T.B."/>
            <person name="Cunha-Junior N.C."/>
            <person name="Fagundes N."/>
            <person name="Falcao C.L."/>
            <person name="Fantinatti F."/>
            <person name="Farias I.P."/>
            <person name="Felipe M.S.S."/>
            <person name="Ferrari L.P."/>
            <person name="Ferro J.A."/>
            <person name="Ferro M.I.T."/>
            <person name="Franco G.R."/>
            <person name="Freitas N.S.A."/>
            <person name="Furlan L.R."/>
            <person name="Gazzinelli R.T."/>
            <person name="Gomes E.A."/>
            <person name="Goncalves P.R."/>
            <person name="Grangeiro T.B."/>
            <person name="Grattapaglia D."/>
            <person name="Grisard E.C."/>
            <person name="Hanna E.S."/>
            <person name="Jardim S.N."/>
            <person name="Laurino J."/>
            <person name="Leoi L.C.T."/>
            <person name="Lima L.F.A."/>
            <person name="Loureiro M.F."/>
            <person name="Lyra M.C.C.P."/>
            <person name="Madeira H.M.F."/>
            <person name="Manfio G.P."/>
            <person name="Maranhao A.Q."/>
            <person name="Martins W.S."/>
            <person name="di Mauro S.M.Z."/>
            <person name="de Medeiros S.R.B."/>
            <person name="Meissner R.V."/>
            <person name="Moreira M.A.M."/>
            <person name="Nascimento F.F."/>
            <person name="Nicolas M.F."/>
            <person name="Oliveira J.G."/>
            <person name="Oliveira S.C."/>
            <person name="Paixao R.F.C."/>
            <person name="Parente J.A."/>
            <person name="Pedrosa F.O."/>
            <person name="Pena S.D.J."/>
            <person name="Pereira J.O."/>
            <person name="Pereira M."/>
            <person name="Pinto L.S.R.C."/>
            <person name="Pinto L.S."/>
            <person name="Porto J.I.R."/>
            <person name="Potrich D.P."/>
            <person name="Ramalho-Neto C.E."/>
            <person name="Reis A.M.M."/>
            <person name="Rigo L.U."/>
            <person name="Rondinelli E."/>
            <person name="Santos E.B.P."/>
            <person name="Santos F.R."/>
            <person name="Schneider M.P.C."/>
            <person name="Seuanez H.N."/>
            <person name="Silva A.M.R."/>
            <person name="da Silva A.L.C."/>
            <person name="Silva D.W."/>
            <person name="Silva R."/>
            <person name="Simoes I.C."/>
            <person name="Simon D."/>
            <person name="Soares C.M.A."/>
            <person name="Soares R.B.A."/>
            <person name="Souza E.M."/>
            <person name="Souza K.R.L."/>
            <person name="Souza R.C."/>
            <person name="Steffens M.B.R."/>
            <person name="Steindel M."/>
            <person name="Teixeira S.R."/>
            <person name="Urmenyi T."/>
            <person name="Vettore A."/>
            <person name="Wassem R."/>
            <person name="Zaha A."/>
            <person name="Simpson A.J.G."/>
        </authorList>
    </citation>
    <scope>NUCLEOTIDE SEQUENCE [LARGE SCALE GENOMIC DNA]</scope>
    <source>
        <strain>ATCC 12472 / DSM 30191 / JCM 1249 / CCUG 213 / NBRC 12614 / NCIMB 9131 / NCTC 9757 / MK</strain>
    </source>
</reference>
<evidence type="ECO:0000255" key="1">
    <source>
        <dbReference type="HAMAP-Rule" id="MF_01151"/>
    </source>
</evidence>
<accession>Q7NXI4</accession>
<keyword id="KW-0143">Chaperone</keyword>
<keyword id="KW-0963">Cytoplasm</keyword>
<keyword id="KW-1185">Reference proteome</keyword>
<keyword id="KW-0346">Stress response</keyword>
<name>GRPE_CHRVO</name>
<gene>
    <name evidence="1" type="primary">grpE</name>
    <name type="ordered locus">CV_1642</name>
</gene>